<name>APT_NITMS</name>
<organism>
    <name type="scientific">Nitrosopumilus maritimus (strain SCM1)</name>
    <dbReference type="NCBI Taxonomy" id="436308"/>
    <lineage>
        <taxon>Archaea</taxon>
        <taxon>Nitrososphaerota</taxon>
        <taxon>Nitrososphaeria</taxon>
        <taxon>Nitrosopumilales</taxon>
        <taxon>Nitrosopumilaceae</taxon>
        <taxon>Nitrosopumilus</taxon>
    </lineage>
</organism>
<reference key="1">
    <citation type="journal article" date="2010" name="Proc. Natl. Acad. Sci. U.S.A.">
        <title>Nitrosopumilus maritimus genome reveals unique mechanisms for nitrification and autotrophy in globally distributed marine crenarchaea.</title>
        <authorList>
            <person name="Walker C.B."/>
            <person name="de la Torre J.R."/>
            <person name="Klotz M.G."/>
            <person name="Urakawa H."/>
            <person name="Pinel N."/>
            <person name="Arp D.J."/>
            <person name="Brochier-Armanet C."/>
            <person name="Chain P.S."/>
            <person name="Chan P.P."/>
            <person name="Gollabgir A."/>
            <person name="Hemp J."/>
            <person name="Hugler M."/>
            <person name="Karr E.A."/>
            <person name="Konneke M."/>
            <person name="Shin M."/>
            <person name="Lawton T.J."/>
            <person name="Lowe T."/>
            <person name="Martens-Habbena W."/>
            <person name="Sayavedra-Soto L.A."/>
            <person name="Lang D."/>
            <person name="Sievert S.M."/>
            <person name="Rosenzweig A.C."/>
            <person name="Manning G."/>
            <person name="Stahl D.A."/>
        </authorList>
    </citation>
    <scope>NUCLEOTIDE SEQUENCE [LARGE SCALE GENOMIC DNA]</scope>
    <source>
        <strain>SCM1</strain>
    </source>
</reference>
<evidence type="ECO:0000255" key="1">
    <source>
        <dbReference type="HAMAP-Rule" id="MF_00004"/>
    </source>
</evidence>
<keyword id="KW-0963">Cytoplasm</keyword>
<keyword id="KW-0328">Glycosyltransferase</keyword>
<keyword id="KW-0660">Purine salvage</keyword>
<keyword id="KW-1185">Reference proteome</keyword>
<keyword id="KW-0808">Transferase</keyword>
<dbReference type="EC" id="2.4.2.7" evidence="1"/>
<dbReference type="EMBL" id="CP000866">
    <property type="protein sequence ID" value="ABX13296.1"/>
    <property type="molecule type" value="Genomic_DNA"/>
</dbReference>
<dbReference type="RefSeq" id="WP_012215783.1">
    <property type="nucleotide sequence ID" value="NC_010085.1"/>
</dbReference>
<dbReference type="SMR" id="A9A3N4"/>
<dbReference type="STRING" id="436308.Nmar_1400"/>
<dbReference type="EnsemblBacteria" id="ABX13296">
    <property type="protein sequence ID" value="ABX13296"/>
    <property type="gene ID" value="Nmar_1400"/>
</dbReference>
<dbReference type="GeneID" id="5773543"/>
<dbReference type="KEGG" id="nmr:Nmar_1400"/>
<dbReference type="eggNOG" id="arCOG00030">
    <property type="taxonomic scope" value="Archaea"/>
</dbReference>
<dbReference type="HOGENOM" id="CLU_063339_3_0_2"/>
<dbReference type="InParanoid" id="A9A3N4"/>
<dbReference type="OrthoDB" id="8323at2157"/>
<dbReference type="PhylomeDB" id="A9A3N4"/>
<dbReference type="UniPathway" id="UPA00588">
    <property type="reaction ID" value="UER00646"/>
</dbReference>
<dbReference type="Proteomes" id="UP000000792">
    <property type="component" value="Chromosome"/>
</dbReference>
<dbReference type="GO" id="GO:0005737">
    <property type="term" value="C:cytoplasm"/>
    <property type="evidence" value="ECO:0000318"/>
    <property type="project" value="GO_Central"/>
</dbReference>
<dbReference type="GO" id="GO:0002055">
    <property type="term" value="F:adenine binding"/>
    <property type="evidence" value="ECO:0000318"/>
    <property type="project" value="GO_Central"/>
</dbReference>
<dbReference type="GO" id="GO:0003999">
    <property type="term" value="F:adenine phosphoribosyltransferase activity"/>
    <property type="evidence" value="ECO:0000318"/>
    <property type="project" value="GO_Central"/>
</dbReference>
<dbReference type="GO" id="GO:0016208">
    <property type="term" value="F:AMP binding"/>
    <property type="evidence" value="ECO:0000318"/>
    <property type="project" value="GO_Central"/>
</dbReference>
<dbReference type="GO" id="GO:0006168">
    <property type="term" value="P:adenine salvage"/>
    <property type="evidence" value="ECO:0000318"/>
    <property type="project" value="GO_Central"/>
</dbReference>
<dbReference type="GO" id="GO:0044209">
    <property type="term" value="P:AMP salvage"/>
    <property type="evidence" value="ECO:0000318"/>
    <property type="project" value="GO_Central"/>
</dbReference>
<dbReference type="GO" id="GO:0006166">
    <property type="term" value="P:purine ribonucleoside salvage"/>
    <property type="evidence" value="ECO:0007669"/>
    <property type="project" value="UniProtKB-KW"/>
</dbReference>
<dbReference type="CDD" id="cd06223">
    <property type="entry name" value="PRTases_typeI"/>
    <property type="match status" value="1"/>
</dbReference>
<dbReference type="FunFam" id="3.40.50.2020:FF:000021">
    <property type="entry name" value="Adenine phosphoribosyltransferase"/>
    <property type="match status" value="1"/>
</dbReference>
<dbReference type="Gene3D" id="3.40.50.2020">
    <property type="match status" value="1"/>
</dbReference>
<dbReference type="HAMAP" id="MF_00004">
    <property type="entry name" value="Aden_phosphoribosyltr"/>
    <property type="match status" value="1"/>
</dbReference>
<dbReference type="InterPro" id="IPR005764">
    <property type="entry name" value="Ade_phspho_trans"/>
</dbReference>
<dbReference type="InterPro" id="IPR000836">
    <property type="entry name" value="PRibTrfase_dom"/>
</dbReference>
<dbReference type="InterPro" id="IPR029057">
    <property type="entry name" value="PRTase-like"/>
</dbReference>
<dbReference type="InterPro" id="IPR050054">
    <property type="entry name" value="UPRTase/APRTase"/>
</dbReference>
<dbReference type="NCBIfam" id="TIGR01090">
    <property type="entry name" value="apt"/>
    <property type="match status" value="1"/>
</dbReference>
<dbReference type="NCBIfam" id="NF002634">
    <property type="entry name" value="PRK02304.1-3"/>
    <property type="match status" value="1"/>
</dbReference>
<dbReference type="NCBIfam" id="NF002636">
    <property type="entry name" value="PRK02304.1-5"/>
    <property type="match status" value="1"/>
</dbReference>
<dbReference type="PANTHER" id="PTHR32315">
    <property type="entry name" value="ADENINE PHOSPHORIBOSYLTRANSFERASE"/>
    <property type="match status" value="1"/>
</dbReference>
<dbReference type="PANTHER" id="PTHR32315:SF3">
    <property type="entry name" value="ADENINE PHOSPHORIBOSYLTRANSFERASE"/>
    <property type="match status" value="1"/>
</dbReference>
<dbReference type="Pfam" id="PF00156">
    <property type="entry name" value="Pribosyltran"/>
    <property type="match status" value="1"/>
</dbReference>
<dbReference type="SUPFAM" id="SSF53271">
    <property type="entry name" value="PRTase-like"/>
    <property type="match status" value="1"/>
</dbReference>
<dbReference type="PROSITE" id="PS00103">
    <property type="entry name" value="PUR_PYR_PR_TRANSFER"/>
    <property type="match status" value="1"/>
</dbReference>
<protein>
    <recommendedName>
        <fullName evidence="1">Adenine phosphoribosyltransferase</fullName>
        <shortName evidence="1">APRT</shortName>
        <ecNumber evidence="1">2.4.2.7</ecNumber>
    </recommendedName>
</protein>
<feature type="chain" id="PRO_1000088987" description="Adenine phosphoribosyltransferase">
    <location>
        <begin position="1"/>
        <end position="170"/>
    </location>
</feature>
<gene>
    <name evidence="1" type="primary">apt</name>
    <name type="ordered locus">Nmar_1400</name>
</gene>
<sequence length="170" mass="18956">MNLRDKIAEYPNFPKKGILFRDFSPILKDPSAMESIADEFSKYFHPKNIDIFAGIESRGFILACILATRYNKGMMMIRKAGKLPGKTTKISYTIEYGKDTIEIQKDIIEEGQRVLICDDLLATGGTAKAAAKLIEKVGGKIVGFAFIIELTDLNGMKGISKYDCKSLVKY</sequence>
<accession>A9A3N4</accession>
<comment type="function">
    <text evidence="1">Catalyzes a salvage reaction resulting in the formation of AMP, that is energically less costly than de novo synthesis.</text>
</comment>
<comment type="catalytic activity">
    <reaction evidence="1">
        <text>AMP + diphosphate = 5-phospho-alpha-D-ribose 1-diphosphate + adenine</text>
        <dbReference type="Rhea" id="RHEA:16609"/>
        <dbReference type="ChEBI" id="CHEBI:16708"/>
        <dbReference type="ChEBI" id="CHEBI:33019"/>
        <dbReference type="ChEBI" id="CHEBI:58017"/>
        <dbReference type="ChEBI" id="CHEBI:456215"/>
        <dbReference type="EC" id="2.4.2.7"/>
    </reaction>
</comment>
<comment type="pathway">
    <text evidence="1">Purine metabolism; AMP biosynthesis via salvage pathway; AMP from adenine: step 1/1.</text>
</comment>
<comment type="subunit">
    <text evidence="1">Homodimer.</text>
</comment>
<comment type="subcellular location">
    <subcellularLocation>
        <location evidence="1">Cytoplasm</location>
    </subcellularLocation>
</comment>
<comment type="similarity">
    <text evidence="1">Belongs to the purine/pyrimidine phosphoribosyltransferase family.</text>
</comment>
<proteinExistence type="inferred from homology"/>